<evidence type="ECO:0000255" key="1"/>
<evidence type="ECO:0000305" key="2"/>
<proteinExistence type="inferred from homology"/>
<dbReference type="EMBL" id="Z48009">
    <property type="protein sequence ID" value="CAA88078.1"/>
    <property type="molecule type" value="Genomic_DNA"/>
</dbReference>
<dbReference type="PIR" id="T18614">
    <property type="entry name" value="T18614"/>
</dbReference>
<dbReference type="RefSeq" id="NP_496042.1">
    <property type="nucleotide sequence ID" value="NM_063641.4"/>
</dbReference>
<dbReference type="SMR" id="Q09203"/>
<dbReference type="FunCoup" id="Q09203">
    <property type="interactions" value="7"/>
</dbReference>
<dbReference type="STRING" id="6239.AH6.4.1"/>
<dbReference type="PaxDb" id="6239-AH6.4"/>
<dbReference type="EnsemblMetazoa" id="AH6.4.1">
    <property type="protein sequence ID" value="AH6.4.1"/>
    <property type="gene ID" value="WBGene00005027"/>
</dbReference>
<dbReference type="GeneID" id="191772"/>
<dbReference type="KEGG" id="cel:CELE_AH6.4"/>
<dbReference type="UCSC" id="AH6.4">
    <property type="organism name" value="c. elegans"/>
</dbReference>
<dbReference type="AGR" id="WB:WBGene00005027"/>
<dbReference type="CTD" id="191772"/>
<dbReference type="WormBase" id="AH6.4">
    <property type="protein sequence ID" value="CE01458"/>
    <property type="gene ID" value="WBGene00005027"/>
    <property type="gene designation" value="sra-1"/>
</dbReference>
<dbReference type="eggNOG" id="ENOG502TGGE">
    <property type="taxonomic scope" value="Eukaryota"/>
</dbReference>
<dbReference type="GeneTree" id="ENSGT00970000195848"/>
<dbReference type="HOGENOM" id="CLU_048025_0_1_1"/>
<dbReference type="InParanoid" id="Q09203"/>
<dbReference type="OMA" id="DETCEWL"/>
<dbReference type="OrthoDB" id="5837586at2759"/>
<dbReference type="PhylomeDB" id="Q09203"/>
<dbReference type="PRO" id="PR:Q09203"/>
<dbReference type="Proteomes" id="UP000001940">
    <property type="component" value="Chromosome II"/>
</dbReference>
<dbReference type="GO" id="GO:0016020">
    <property type="term" value="C:membrane"/>
    <property type="evidence" value="ECO:0007669"/>
    <property type="project" value="UniProtKB-SubCell"/>
</dbReference>
<dbReference type="GO" id="GO:0004930">
    <property type="term" value="F:G protein-coupled receptor activity"/>
    <property type="evidence" value="ECO:0007669"/>
    <property type="project" value="InterPro"/>
</dbReference>
<dbReference type="GO" id="GO:0004984">
    <property type="term" value="F:olfactory receptor activity"/>
    <property type="evidence" value="ECO:0000318"/>
    <property type="project" value="GO_Central"/>
</dbReference>
<dbReference type="GO" id="GO:0050907">
    <property type="term" value="P:detection of chemical stimulus involved in sensory perception"/>
    <property type="evidence" value="ECO:0000318"/>
    <property type="project" value="GO_Central"/>
</dbReference>
<dbReference type="InterPro" id="IPR000344">
    <property type="entry name" value="7TM_GPCR_serpentine_rcpt_Sra"/>
</dbReference>
<dbReference type="InterPro" id="IPR051080">
    <property type="entry name" value="Nematode_rcpt-like_serp_alpha"/>
</dbReference>
<dbReference type="PANTHER" id="PTHR31357:SF5">
    <property type="entry name" value="SERPENTINE RECEPTOR CLASS ALPHA-1-RELATED"/>
    <property type="match status" value="1"/>
</dbReference>
<dbReference type="PANTHER" id="PTHR31357">
    <property type="entry name" value="SERPENTINE RECEPTOR CLASS ALPHA-10"/>
    <property type="match status" value="1"/>
</dbReference>
<dbReference type="Pfam" id="PF02117">
    <property type="entry name" value="7TM_GPCR_Sra"/>
    <property type="match status" value="1"/>
</dbReference>
<dbReference type="PRINTS" id="PR00697">
    <property type="entry name" value="TMPROTEINSRA"/>
</dbReference>
<accession>Q09203</accession>
<name>SRA1_CAEEL</name>
<sequence>MSNITSASAAQIDHASSWNFRFAVFCSQLSIISTFILSVIAVKWIFTKSTFQTSTKIILVFNFVYANIHQFMYAIISLGMAYKGIFLLDETCEWLITEKDCLLYTEVLYVGISGMIYSQTGILIERAFATLYRNYTAKISRLVGIIISTFVLIMSIATYQIIISDDPLEGVVLSCFVPAQHSAQRANTFLFIALILTFVNLISSAAVMFYNKRLEYSIRYKVRERFKKREAIYSTHTICVVCMAQFVTMLVYSSGVLILRCNMSNILLTTFYKLITWVYTVQYNALLFPLILIFRIRATKLSRTKKIQDITSANQSQTEHYNQITSAWKIT</sequence>
<keyword id="KW-0472">Membrane</keyword>
<keyword id="KW-1185">Reference proteome</keyword>
<keyword id="KW-0812">Transmembrane</keyword>
<keyword id="KW-1133">Transmembrane helix</keyword>
<organism>
    <name type="scientific">Caenorhabditis elegans</name>
    <dbReference type="NCBI Taxonomy" id="6239"/>
    <lineage>
        <taxon>Eukaryota</taxon>
        <taxon>Metazoa</taxon>
        <taxon>Ecdysozoa</taxon>
        <taxon>Nematoda</taxon>
        <taxon>Chromadorea</taxon>
        <taxon>Rhabditida</taxon>
        <taxon>Rhabditina</taxon>
        <taxon>Rhabditomorpha</taxon>
        <taxon>Rhabditoidea</taxon>
        <taxon>Rhabditidae</taxon>
        <taxon>Peloderinae</taxon>
        <taxon>Caenorhabditis</taxon>
    </lineage>
</organism>
<gene>
    <name type="primary">sra-1</name>
    <name type="ORF">AH6.4</name>
</gene>
<reference key="1">
    <citation type="journal article" date="1998" name="Science">
        <title>Genome sequence of the nematode C. elegans: a platform for investigating biology.</title>
        <authorList>
            <consortium name="The C. elegans sequencing consortium"/>
        </authorList>
    </citation>
    <scope>NUCLEOTIDE SEQUENCE [LARGE SCALE GENOMIC DNA]</scope>
    <source>
        <strain>Bristol N2</strain>
    </source>
</reference>
<feature type="chain" id="PRO_0000104468" description="Serpentine receptor class alpha-1">
    <location>
        <begin position="1"/>
        <end position="331"/>
    </location>
</feature>
<feature type="transmembrane region" description="Helical" evidence="1">
    <location>
        <begin position="22"/>
        <end position="42"/>
    </location>
</feature>
<feature type="transmembrane region" description="Helical" evidence="1">
    <location>
        <begin position="57"/>
        <end position="77"/>
    </location>
</feature>
<feature type="transmembrane region" description="Helical" evidence="1">
    <location>
        <begin position="104"/>
        <end position="124"/>
    </location>
</feature>
<feature type="transmembrane region" description="Helical" evidence="1">
    <location>
        <begin position="143"/>
        <end position="163"/>
    </location>
</feature>
<feature type="transmembrane region" description="Helical" evidence="1">
    <location>
        <begin position="189"/>
        <end position="209"/>
    </location>
</feature>
<feature type="transmembrane region" description="Helical" evidence="1">
    <location>
        <begin position="238"/>
        <end position="258"/>
    </location>
</feature>
<feature type="transmembrane region" description="Helical" evidence="1">
    <location>
        <begin position="274"/>
        <end position="294"/>
    </location>
</feature>
<comment type="subcellular location">
    <subcellularLocation>
        <location evidence="2">Membrane</location>
        <topology evidence="2">Multi-pass membrane protein</topology>
    </subcellularLocation>
</comment>
<comment type="similarity">
    <text evidence="2">Belongs to the nematode receptor-like protein sra family.</text>
</comment>
<protein>
    <recommendedName>
        <fullName>Serpentine receptor class alpha-1</fullName>
        <shortName>Protein sra-1</shortName>
    </recommendedName>
</protein>